<proteinExistence type="inferred from homology"/>
<gene>
    <name evidence="1" type="primary">ycf3</name>
    <name type="ordered locus">PMT9312_0134</name>
</gene>
<feature type="chain" id="PRO_0000325044" description="Photosystem I assembly protein Ycf3">
    <location>
        <begin position="1"/>
        <end position="173"/>
    </location>
</feature>
<feature type="repeat" description="TPR 1">
    <location>
        <begin position="35"/>
        <end position="68"/>
    </location>
</feature>
<feature type="repeat" description="TPR 2">
    <location>
        <begin position="72"/>
        <end position="105"/>
    </location>
</feature>
<feature type="repeat" description="TPR 3">
    <location>
        <begin position="120"/>
        <end position="153"/>
    </location>
</feature>
<evidence type="ECO:0000255" key="1">
    <source>
        <dbReference type="HAMAP-Rule" id="MF_00439"/>
    </source>
</evidence>
<name>YCF3_PROM9</name>
<sequence>MPSNQNRDNFIDKAFTVIAESIVKIMPIEEKEKKAYIYYRDGLAAQNNGDYSEALEYYKESLLLEENKIDRGETLKNMAIIFMSNGEEDLSIETYEKALVENPKQPSCLKNIGLIYEKRGRNAEQNGDLDQRDIWFDKAAEVWTKAVKLYPGGYLDIENWLKNSGRSSIDMYL</sequence>
<protein>
    <recommendedName>
        <fullName evidence="1">Photosystem I assembly protein Ycf3</fullName>
    </recommendedName>
</protein>
<organism>
    <name type="scientific">Prochlorococcus marinus (strain MIT 9312)</name>
    <dbReference type="NCBI Taxonomy" id="74546"/>
    <lineage>
        <taxon>Bacteria</taxon>
        <taxon>Bacillati</taxon>
        <taxon>Cyanobacteriota</taxon>
        <taxon>Cyanophyceae</taxon>
        <taxon>Synechococcales</taxon>
        <taxon>Prochlorococcaceae</taxon>
        <taxon>Prochlorococcus</taxon>
    </lineage>
</organism>
<accession>Q31D49</accession>
<reference key="1">
    <citation type="journal article" date="2006" name="Science">
        <title>Genomic islands and the ecology and evolution of Prochlorococcus.</title>
        <authorList>
            <person name="Coleman M.L."/>
            <person name="Sullivan M.B."/>
            <person name="Martiny A.C."/>
            <person name="Steglich C."/>
            <person name="Barry K."/>
            <person name="Delong E.F."/>
            <person name="Chisholm S.W."/>
        </authorList>
    </citation>
    <scope>NUCLEOTIDE SEQUENCE [LARGE SCALE GENOMIC DNA]</scope>
    <source>
        <strain>MIT 9312</strain>
    </source>
</reference>
<dbReference type="EMBL" id="CP000111">
    <property type="protein sequence ID" value="ABB49196.1"/>
    <property type="molecule type" value="Genomic_DNA"/>
</dbReference>
<dbReference type="RefSeq" id="WP_011375700.1">
    <property type="nucleotide sequence ID" value="NC_007577.1"/>
</dbReference>
<dbReference type="SMR" id="Q31D49"/>
<dbReference type="STRING" id="74546.PMT9312_0134"/>
<dbReference type="KEGG" id="pmi:PMT9312_0134"/>
<dbReference type="eggNOG" id="COG3063">
    <property type="taxonomic scope" value="Bacteria"/>
</dbReference>
<dbReference type="HOGENOM" id="CLU_141248_0_0_3"/>
<dbReference type="OrthoDB" id="9429505at2"/>
<dbReference type="Proteomes" id="UP000002715">
    <property type="component" value="Chromosome"/>
</dbReference>
<dbReference type="GO" id="GO:0031676">
    <property type="term" value="C:plasma membrane-derived thylakoid membrane"/>
    <property type="evidence" value="ECO:0007669"/>
    <property type="project" value="UniProtKB-SubCell"/>
</dbReference>
<dbReference type="GO" id="GO:0015979">
    <property type="term" value="P:photosynthesis"/>
    <property type="evidence" value="ECO:0007669"/>
    <property type="project" value="UniProtKB-UniRule"/>
</dbReference>
<dbReference type="Gene3D" id="1.25.40.10">
    <property type="entry name" value="Tetratricopeptide repeat domain"/>
    <property type="match status" value="1"/>
</dbReference>
<dbReference type="HAMAP" id="MF_00439">
    <property type="entry name" value="Ycf3"/>
    <property type="match status" value="1"/>
</dbReference>
<dbReference type="InterPro" id="IPR022818">
    <property type="entry name" value="PSI_Ycf3_assembly"/>
</dbReference>
<dbReference type="InterPro" id="IPR011990">
    <property type="entry name" value="TPR-like_helical_dom_sf"/>
</dbReference>
<dbReference type="InterPro" id="IPR019734">
    <property type="entry name" value="TPR_rpt"/>
</dbReference>
<dbReference type="InterPro" id="IPR051685">
    <property type="entry name" value="Ycf3/AcsC/BcsC/TPR_MFPF"/>
</dbReference>
<dbReference type="NCBIfam" id="NF002725">
    <property type="entry name" value="PRK02603.1"/>
    <property type="match status" value="1"/>
</dbReference>
<dbReference type="PANTHER" id="PTHR44943">
    <property type="entry name" value="CELLULOSE SYNTHASE OPERON PROTEIN C"/>
    <property type="match status" value="1"/>
</dbReference>
<dbReference type="PANTHER" id="PTHR44943:SF8">
    <property type="entry name" value="TPR REPEAT-CONTAINING PROTEIN MJ0263"/>
    <property type="match status" value="1"/>
</dbReference>
<dbReference type="Pfam" id="PF13181">
    <property type="entry name" value="TPR_8"/>
    <property type="match status" value="1"/>
</dbReference>
<dbReference type="SMART" id="SM00028">
    <property type="entry name" value="TPR"/>
    <property type="match status" value="3"/>
</dbReference>
<dbReference type="SUPFAM" id="SSF48452">
    <property type="entry name" value="TPR-like"/>
    <property type="match status" value="1"/>
</dbReference>
<dbReference type="PROSITE" id="PS50005">
    <property type="entry name" value="TPR"/>
    <property type="match status" value="2"/>
</dbReference>
<dbReference type="PROSITE" id="PS50293">
    <property type="entry name" value="TPR_REGION"/>
    <property type="match status" value="1"/>
</dbReference>
<keyword id="KW-0472">Membrane</keyword>
<keyword id="KW-0602">Photosynthesis</keyword>
<keyword id="KW-0677">Repeat</keyword>
<keyword id="KW-0793">Thylakoid</keyword>
<keyword id="KW-0802">TPR repeat</keyword>
<comment type="function">
    <text evidence="1">Essential for the assembly of the photosystem I (PSI) complex. May act as a chaperone-like factor to guide the assembly of the PSI subunits.</text>
</comment>
<comment type="subcellular location">
    <subcellularLocation>
        <location evidence="1">Cellular thylakoid membrane</location>
        <topology evidence="1">Peripheral membrane protein</topology>
    </subcellularLocation>
</comment>
<comment type="similarity">
    <text evidence="1">Belongs to the Ycf3 family.</text>
</comment>